<reference key="1">
    <citation type="journal article" date="1997" name="J. Bacteriol.">
        <title>Complete genome sequence of Methanobacterium thermoautotrophicum deltaH: functional analysis and comparative genomics.</title>
        <authorList>
            <person name="Smith D.R."/>
            <person name="Doucette-Stamm L.A."/>
            <person name="Deloughery C."/>
            <person name="Lee H.-M."/>
            <person name="Dubois J."/>
            <person name="Aldredge T."/>
            <person name="Bashirzadeh R."/>
            <person name="Blakely D."/>
            <person name="Cook R."/>
            <person name="Gilbert K."/>
            <person name="Harrison D."/>
            <person name="Hoang L."/>
            <person name="Keagle P."/>
            <person name="Lumm W."/>
            <person name="Pothier B."/>
            <person name="Qiu D."/>
            <person name="Spadafora R."/>
            <person name="Vicare R."/>
            <person name="Wang Y."/>
            <person name="Wierzbowski J."/>
            <person name="Gibson R."/>
            <person name="Jiwani N."/>
            <person name="Caruso A."/>
            <person name="Bush D."/>
            <person name="Safer H."/>
            <person name="Patwell D."/>
            <person name="Prabhakar S."/>
            <person name="McDougall S."/>
            <person name="Shimer G."/>
            <person name="Goyal A."/>
            <person name="Pietrovski S."/>
            <person name="Church G.M."/>
            <person name="Daniels C.J."/>
            <person name="Mao J.-I."/>
            <person name="Rice P."/>
            <person name="Noelling J."/>
            <person name="Reeve J.N."/>
        </authorList>
    </citation>
    <scope>NUCLEOTIDE SEQUENCE [LARGE SCALE GENOMIC DNA]</scope>
    <source>
        <strain>ATCC 29096 / DSM 1053 / JCM 10044 / NBRC 100330 / Delta H</strain>
    </source>
</reference>
<keyword id="KW-1185">Reference proteome</keyword>
<keyword id="KW-0687">Ribonucleoprotein</keyword>
<keyword id="KW-0689">Ribosomal protein</keyword>
<evidence type="ECO:0000256" key="1">
    <source>
        <dbReference type="SAM" id="MobiDB-lite"/>
    </source>
</evidence>
<evidence type="ECO:0000305" key="2"/>
<accession>O26128</accession>
<organism>
    <name type="scientific">Methanothermobacter thermautotrophicus (strain ATCC 29096 / DSM 1053 / JCM 10044 / NBRC 100330 / Delta H)</name>
    <name type="common">Methanobacterium thermoautotrophicum</name>
    <dbReference type="NCBI Taxonomy" id="187420"/>
    <lineage>
        <taxon>Archaea</taxon>
        <taxon>Methanobacteriati</taxon>
        <taxon>Methanobacteriota</taxon>
        <taxon>Methanomada group</taxon>
        <taxon>Methanobacteria</taxon>
        <taxon>Methanobacteriales</taxon>
        <taxon>Methanobacteriaceae</taxon>
        <taxon>Methanothermobacter</taxon>
    </lineage>
</organism>
<gene>
    <name type="primary">rpl32e</name>
    <name type="ordered locus">MTH_20</name>
</gene>
<name>RL32_METTH</name>
<protein>
    <recommendedName>
        <fullName evidence="2">Large ribosomal subunit protein eL32</fullName>
    </recommendedName>
    <alternativeName>
        <fullName>50S ribosomal protein L32e</fullName>
    </alternativeName>
</protein>
<dbReference type="EMBL" id="AE000666">
    <property type="protein sequence ID" value="AAB84522.1"/>
    <property type="molecule type" value="Genomic_DNA"/>
</dbReference>
<dbReference type="PIR" id="D69124">
    <property type="entry name" value="D69124"/>
</dbReference>
<dbReference type="RefSeq" id="WP_010875662.1">
    <property type="nucleotide sequence ID" value="NC_000916.1"/>
</dbReference>
<dbReference type="SMR" id="O26128"/>
<dbReference type="FunCoup" id="O26128">
    <property type="interactions" value="172"/>
</dbReference>
<dbReference type="STRING" id="187420.MTH_20"/>
<dbReference type="PaxDb" id="187420-MTH_20"/>
<dbReference type="EnsemblBacteria" id="AAB84522">
    <property type="protein sequence ID" value="AAB84522"/>
    <property type="gene ID" value="MTH_20"/>
</dbReference>
<dbReference type="KEGG" id="mth:MTH_20"/>
<dbReference type="PATRIC" id="fig|187420.15.peg.20"/>
<dbReference type="HOGENOM" id="CLU_071479_3_1_2"/>
<dbReference type="InParanoid" id="O26128"/>
<dbReference type="Proteomes" id="UP000005223">
    <property type="component" value="Chromosome"/>
</dbReference>
<dbReference type="GO" id="GO:0022625">
    <property type="term" value="C:cytosolic large ribosomal subunit"/>
    <property type="evidence" value="ECO:0007669"/>
    <property type="project" value="TreeGrafter"/>
</dbReference>
<dbReference type="GO" id="GO:0003735">
    <property type="term" value="F:structural constituent of ribosome"/>
    <property type="evidence" value="ECO:0007669"/>
    <property type="project" value="InterPro"/>
</dbReference>
<dbReference type="GO" id="GO:0006412">
    <property type="term" value="P:translation"/>
    <property type="evidence" value="ECO:0007669"/>
    <property type="project" value="InterPro"/>
</dbReference>
<dbReference type="CDD" id="cd00513">
    <property type="entry name" value="Ribosomal_L32_L32e"/>
    <property type="match status" value="1"/>
</dbReference>
<dbReference type="InterPro" id="IPR001515">
    <property type="entry name" value="Ribosomal_eL32"/>
</dbReference>
<dbReference type="InterPro" id="IPR023654">
    <property type="entry name" value="Ribosomal_eL32_arc"/>
</dbReference>
<dbReference type="InterPro" id="IPR018263">
    <property type="entry name" value="Ribosomal_eL32_CS"/>
</dbReference>
<dbReference type="InterPro" id="IPR036351">
    <property type="entry name" value="Ribosomal_eL32_sf"/>
</dbReference>
<dbReference type="NCBIfam" id="NF006332">
    <property type="entry name" value="PRK08562.1"/>
    <property type="match status" value="1"/>
</dbReference>
<dbReference type="PANTHER" id="PTHR23413">
    <property type="entry name" value="60S RIBOSOMAL PROTEIN L32 AND DNA-DIRECTED RNA POLYMERASE II, SUBUNIT N"/>
    <property type="match status" value="1"/>
</dbReference>
<dbReference type="PANTHER" id="PTHR23413:SF1">
    <property type="entry name" value="RIBOSOMAL PROTEIN L32"/>
    <property type="match status" value="1"/>
</dbReference>
<dbReference type="Pfam" id="PF01655">
    <property type="entry name" value="Ribosomal_L32e"/>
    <property type="match status" value="1"/>
</dbReference>
<dbReference type="SMART" id="SM01393">
    <property type="entry name" value="Ribosomal_L32e"/>
    <property type="match status" value="1"/>
</dbReference>
<dbReference type="SUPFAM" id="SSF52042">
    <property type="entry name" value="Ribosomal protein L32e"/>
    <property type="match status" value="1"/>
</dbReference>
<dbReference type="PROSITE" id="PS00580">
    <property type="entry name" value="RIBOSOMAL_L32E"/>
    <property type="match status" value="1"/>
</dbReference>
<comment type="similarity">
    <text evidence="2">Belongs to the eukaryotic ribosomal protein eL32 family.</text>
</comment>
<proteinExistence type="inferred from homology"/>
<feature type="chain" id="PRO_0000131155" description="Large ribosomal subunit protein eL32">
    <location>
        <begin position="1"/>
        <end position="108"/>
    </location>
</feature>
<feature type="region of interest" description="Disordered" evidence="1">
    <location>
        <begin position="21"/>
        <end position="44"/>
    </location>
</feature>
<feature type="compositionally biased region" description="Basic residues" evidence="1">
    <location>
        <begin position="21"/>
        <end position="30"/>
    </location>
</feature>
<sequence>MRKKFKRQEYARYKKLGEKWRRPRGRTSKMRRYEKGKPAMPAIGYRKPSEVRGLHPSGYEDVLVSNMRELEALDPEKQAARIASAVGARKKTLMLEKARELGIKVLNP</sequence>